<feature type="signal peptide" evidence="1">
    <location>
        <begin position="1"/>
        <end position="24"/>
    </location>
</feature>
<feature type="chain" id="PRO_5002656325" description="Probable ABC transporter phosphite binding protein PhnD1">
    <location>
        <begin position="25"/>
        <end position="297"/>
    </location>
</feature>
<feature type="strand" evidence="7">
    <location>
        <begin position="28"/>
        <end position="33"/>
    </location>
</feature>
<feature type="helix" evidence="7">
    <location>
        <begin position="39"/>
        <end position="57"/>
    </location>
</feature>
<feature type="strand" evidence="7">
    <location>
        <begin position="59"/>
        <end position="63"/>
    </location>
</feature>
<feature type="helix" evidence="7">
    <location>
        <begin position="69"/>
        <end position="77"/>
    </location>
</feature>
<feature type="strand" evidence="7">
    <location>
        <begin position="82"/>
        <end position="86"/>
    </location>
</feature>
<feature type="helix" evidence="7">
    <location>
        <begin position="88"/>
        <end position="97"/>
    </location>
</feature>
<feature type="strand" evidence="7">
    <location>
        <begin position="102"/>
        <end position="107"/>
    </location>
</feature>
<feature type="helix" evidence="7">
    <location>
        <begin position="108"/>
        <end position="111"/>
    </location>
</feature>
<feature type="strand" evidence="7">
    <location>
        <begin position="115"/>
        <end position="120"/>
    </location>
</feature>
<feature type="helix" evidence="7">
    <location>
        <begin position="121"/>
        <end position="123"/>
    </location>
</feature>
<feature type="helix" evidence="7">
    <location>
        <begin position="131"/>
        <end position="137"/>
    </location>
</feature>
<feature type="strand" evidence="7">
    <location>
        <begin position="142"/>
        <end position="145"/>
    </location>
</feature>
<feature type="turn" evidence="7">
    <location>
        <begin position="150"/>
        <end position="153"/>
    </location>
</feature>
<feature type="helix" evidence="7">
    <location>
        <begin position="154"/>
        <end position="162"/>
    </location>
</feature>
<feature type="helix" evidence="7">
    <location>
        <begin position="167"/>
        <end position="169"/>
    </location>
</feature>
<feature type="helix" evidence="7">
    <location>
        <begin position="171"/>
        <end position="173"/>
    </location>
</feature>
<feature type="helix" evidence="7">
    <location>
        <begin position="181"/>
        <end position="189"/>
    </location>
</feature>
<feature type="strand" evidence="7">
    <location>
        <begin position="192"/>
        <end position="199"/>
    </location>
</feature>
<feature type="helix" evidence="7">
    <location>
        <begin position="200"/>
        <end position="209"/>
    </location>
</feature>
<feature type="helix" evidence="7">
    <location>
        <begin position="211"/>
        <end position="213"/>
    </location>
</feature>
<feature type="strand" evidence="7">
    <location>
        <begin position="217"/>
        <end position="222"/>
    </location>
</feature>
<feature type="strand" evidence="7">
    <location>
        <begin position="230"/>
        <end position="233"/>
    </location>
</feature>
<feature type="helix" evidence="7">
    <location>
        <begin position="237"/>
        <end position="241"/>
    </location>
</feature>
<feature type="helix" evidence="7">
    <location>
        <begin position="245"/>
        <end position="254"/>
    </location>
</feature>
<feature type="helix" evidence="7">
    <location>
        <begin position="261"/>
        <end position="269"/>
    </location>
</feature>
<feature type="helix" evidence="7">
    <location>
        <begin position="280"/>
        <end position="283"/>
    </location>
</feature>
<feature type="helix" evidence="7">
    <location>
        <begin position="284"/>
        <end position="292"/>
    </location>
</feature>
<sequence length="297" mass="33809">MFNLKYFLVSSSLLFSVFSSPVFSNPKVLKVGAIPDQNQDVLDKRFNLFSKELSKQLDVEVKYIPVINYIAAVTGFRTKDLDLVWFGGLSGVQARLQTPNSIVIAQRDIDKEFKSVFVVNKNLELNSISNIKGLKKLKNLRFTFGSENSTSGRLMPEYFLNQAGVEIKHFKGKKAGFSGSHDATIALVNSGAFDAGALNKQVWENNLKNNPKRTSNLELFWITPEYVDYHWVAQGDLENRFGEGFTKELKSVILNLDIKQKSHKQILDMFNAKRFIKAESKQYKNIEEIGRKLNKIR</sequence>
<proteinExistence type="evidence at protein level"/>
<name>PHND1_PROM0</name>
<organism>
    <name type="scientific">Prochlorococcus marinus (strain MIT 9301)</name>
    <dbReference type="NCBI Taxonomy" id="167546"/>
    <lineage>
        <taxon>Bacteria</taxon>
        <taxon>Bacillati</taxon>
        <taxon>Cyanobacteriota</taxon>
        <taxon>Cyanophyceae</taxon>
        <taxon>Synechococcales</taxon>
        <taxon>Prochlorococcaceae</taxon>
        <taxon>Prochlorococcus</taxon>
    </lineage>
</organism>
<gene>
    <name evidence="3" type="primary">phnD1</name>
    <name evidence="6" type="ordered locus">P9301_07261</name>
</gene>
<protein>
    <recommendedName>
        <fullName evidence="4">Probable ABC transporter phosphite binding protein PhnD1</fullName>
    </recommendedName>
</protein>
<keyword id="KW-0002">3D-structure</keyword>
<keyword id="KW-0574">Periplasm</keyword>
<keyword id="KW-1185">Reference proteome</keyword>
<keyword id="KW-0732">Signal</keyword>
<accession>A3PC74</accession>
<comment type="function">
    <text evidence="2">Probably part of the ABC transporter complex PhnD1C1E1. Binds strongly to inorganic phosphite and with very weak affinities to methylphosphonate (MPn) and phosphate.</text>
</comment>
<comment type="subunit">
    <text evidence="5">The complex may be composed of two ATP-binding proteins (PhnC1), two transmembrane proteins (PhnE1) and a solute-binding protein (PhnD1).</text>
</comment>
<comment type="subcellular location">
    <subcellularLocation>
        <location evidence="4">Periplasm</location>
    </subcellularLocation>
</comment>
<comment type="similarity">
    <text evidence="4">Belongs to the phosphate/phosphite/phosphonate binding protein family.</text>
</comment>
<reference key="1">
    <citation type="journal article" date="2007" name="PLoS Genet.">
        <title>Patterns and implications of gene gain and loss in the evolution of Prochlorococcus.</title>
        <authorList>
            <person name="Kettler G.C."/>
            <person name="Martiny A.C."/>
            <person name="Huang K."/>
            <person name="Zucker J."/>
            <person name="Coleman M.L."/>
            <person name="Rodrigue S."/>
            <person name="Chen F."/>
            <person name="Lapidus A."/>
            <person name="Ferriera S."/>
            <person name="Johnson J."/>
            <person name="Steglich C."/>
            <person name="Church G.M."/>
            <person name="Richardson P."/>
            <person name="Chisholm S.W."/>
        </authorList>
    </citation>
    <scope>NUCLEOTIDE SEQUENCE [LARGE SCALE GENOMIC DNA]</scope>
    <source>
        <strain>MIT 9301</strain>
    </source>
</reference>
<reference key="2">
    <citation type="journal article" date="2012" name="ISME J.">
        <title>Potential for phosphite and phosphonate utilization by Prochlorococcus.</title>
        <authorList>
            <person name="Feingersch R."/>
            <person name="Philosof A."/>
            <person name="Mejuch T."/>
            <person name="Glaser F."/>
            <person name="Alalouf O."/>
            <person name="Shoham Y."/>
            <person name="Beja O."/>
        </authorList>
    </citation>
    <scope>FUNCTION AS A BINDING PROTEIN</scope>
    <source>
        <strain>MIT 9301</strain>
    </source>
</reference>
<dbReference type="EMBL" id="CP000576">
    <property type="protein sequence ID" value="ABO17349.1"/>
    <property type="molecule type" value="Genomic_DNA"/>
</dbReference>
<dbReference type="RefSeq" id="WP_011862714.1">
    <property type="nucleotide sequence ID" value="NC_009091.1"/>
</dbReference>
<dbReference type="PDB" id="5LQ5">
    <property type="method" value="X-ray"/>
    <property type="resolution" value="1.46 A"/>
    <property type="chains" value="A=25-297"/>
</dbReference>
<dbReference type="PDB" id="5LQ8">
    <property type="method" value="X-ray"/>
    <property type="resolution" value="1.52 A"/>
    <property type="chains" value="A=25-297"/>
</dbReference>
<dbReference type="PDBsum" id="5LQ5"/>
<dbReference type="PDBsum" id="5LQ8"/>
<dbReference type="SMR" id="A3PC74"/>
<dbReference type="STRING" id="167546.P9301_07261"/>
<dbReference type="KEGG" id="pmg:P9301_07261"/>
<dbReference type="eggNOG" id="COG3221">
    <property type="taxonomic scope" value="Bacteria"/>
</dbReference>
<dbReference type="HOGENOM" id="CLU_051472_6_2_3"/>
<dbReference type="OrthoDB" id="9764656at2"/>
<dbReference type="Proteomes" id="UP000001430">
    <property type="component" value="Chromosome"/>
</dbReference>
<dbReference type="GO" id="GO:0043190">
    <property type="term" value="C:ATP-binding cassette (ABC) transporter complex"/>
    <property type="evidence" value="ECO:0007669"/>
    <property type="project" value="InterPro"/>
</dbReference>
<dbReference type="GO" id="GO:0042597">
    <property type="term" value="C:periplasmic space"/>
    <property type="evidence" value="ECO:0007669"/>
    <property type="project" value="UniProtKB-SubCell"/>
</dbReference>
<dbReference type="GO" id="GO:0055085">
    <property type="term" value="P:transmembrane transport"/>
    <property type="evidence" value="ECO:0007669"/>
    <property type="project" value="InterPro"/>
</dbReference>
<dbReference type="Gene3D" id="3.40.190.10">
    <property type="entry name" value="Periplasmic binding protein-like II"/>
    <property type="match status" value="2"/>
</dbReference>
<dbReference type="InterPro" id="IPR030836">
    <property type="entry name" value="ABC_peri_PhnD-like"/>
</dbReference>
<dbReference type="InterPro" id="IPR005770">
    <property type="entry name" value="PhnD"/>
</dbReference>
<dbReference type="NCBIfam" id="TIGR01098">
    <property type="entry name" value="3A0109s03R"/>
    <property type="match status" value="1"/>
</dbReference>
<dbReference type="NCBIfam" id="TIGR04553">
    <property type="entry name" value="ABC_peri_selen"/>
    <property type="match status" value="1"/>
</dbReference>
<dbReference type="PANTHER" id="PTHR35841">
    <property type="entry name" value="PHOSPHONATES-BINDING PERIPLASMIC PROTEIN"/>
    <property type="match status" value="1"/>
</dbReference>
<dbReference type="PANTHER" id="PTHR35841:SF1">
    <property type="entry name" value="PHOSPHONATES-BINDING PERIPLASMIC PROTEIN"/>
    <property type="match status" value="1"/>
</dbReference>
<dbReference type="Pfam" id="PF12974">
    <property type="entry name" value="Phosphonate-bd"/>
    <property type="match status" value="1"/>
</dbReference>
<dbReference type="SUPFAM" id="SSF53850">
    <property type="entry name" value="Periplasmic binding protein-like II"/>
    <property type="match status" value="1"/>
</dbReference>
<evidence type="ECO:0000255" key="1"/>
<evidence type="ECO:0000269" key="2">
    <source>
    </source>
</evidence>
<evidence type="ECO:0000303" key="3">
    <source>
    </source>
</evidence>
<evidence type="ECO:0000305" key="4"/>
<evidence type="ECO:0000305" key="5">
    <source>
    </source>
</evidence>
<evidence type="ECO:0000312" key="6">
    <source>
        <dbReference type="EMBL" id="ABO17349.1"/>
    </source>
</evidence>
<evidence type="ECO:0007829" key="7">
    <source>
        <dbReference type="PDB" id="5LQ5"/>
    </source>
</evidence>